<dbReference type="EMBL" id="AE014299">
    <property type="protein sequence ID" value="AAN53780.1"/>
    <property type="molecule type" value="Genomic_DNA"/>
</dbReference>
<dbReference type="RefSeq" id="NP_716335.1">
    <property type="nucleotide sequence ID" value="NC_004347.2"/>
</dbReference>
<dbReference type="RefSeq" id="WP_011071020.1">
    <property type="nucleotide sequence ID" value="NC_004347.2"/>
</dbReference>
<dbReference type="SMR" id="Q8EIX5"/>
<dbReference type="STRING" id="211586.SO_0702"/>
<dbReference type="PaxDb" id="211586-SO_0702"/>
<dbReference type="DNASU" id="1168562"/>
<dbReference type="KEGG" id="son:SO_0702"/>
<dbReference type="PATRIC" id="fig|211586.12.peg.677"/>
<dbReference type="eggNOG" id="COG0534">
    <property type="taxonomic scope" value="Bacteria"/>
</dbReference>
<dbReference type="HOGENOM" id="CLU_012893_5_3_6"/>
<dbReference type="OrthoDB" id="9806302at2"/>
<dbReference type="PhylomeDB" id="Q8EIX5"/>
<dbReference type="BioCyc" id="SONE211586:G1GMP-662-MONOMER"/>
<dbReference type="Proteomes" id="UP000008186">
    <property type="component" value="Chromosome"/>
</dbReference>
<dbReference type="GO" id="GO:0005886">
    <property type="term" value="C:plasma membrane"/>
    <property type="evidence" value="ECO:0007669"/>
    <property type="project" value="UniProtKB-SubCell"/>
</dbReference>
<dbReference type="GO" id="GO:0015297">
    <property type="term" value="F:antiporter activity"/>
    <property type="evidence" value="ECO:0007669"/>
    <property type="project" value="InterPro"/>
</dbReference>
<dbReference type="GO" id="GO:0042910">
    <property type="term" value="F:xenobiotic transmembrane transporter activity"/>
    <property type="evidence" value="ECO:0007669"/>
    <property type="project" value="InterPro"/>
</dbReference>
<dbReference type="InterPro" id="IPR002528">
    <property type="entry name" value="MATE_fam"/>
</dbReference>
<dbReference type="InterPro" id="IPR048279">
    <property type="entry name" value="MdtK-like"/>
</dbReference>
<dbReference type="InterPro" id="IPR052031">
    <property type="entry name" value="Membrane_Transporter-Flippase"/>
</dbReference>
<dbReference type="NCBIfam" id="TIGR00797">
    <property type="entry name" value="matE"/>
    <property type="match status" value="1"/>
</dbReference>
<dbReference type="PANTHER" id="PTHR43549">
    <property type="entry name" value="MULTIDRUG RESISTANCE PROTEIN YPNP-RELATED"/>
    <property type="match status" value="1"/>
</dbReference>
<dbReference type="PANTHER" id="PTHR43549:SF3">
    <property type="entry name" value="MULTIDRUG RESISTANCE PROTEIN YPNP-RELATED"/>
    <property type="match status" value="1"/>
</dbReference>
<dbReference type="Pfam" id="PF01554">
    <property type="entry name" value="MatE"/>
    <property type="match status" value="2"/>
</dbReference>
<dbReference type="PIRSF" id="PIRSF006603">
    <property type="entry name" value="DinF"/>
    <property type="match status" value="1"/>
</dbReference>
<feature type="chain" id="PRO_0000447490" description="FAD transporter">
    <location>
        <begin position="1"/>
        <end position="452"/>
    </location>
</feature>
<feature type="transmembrane region" description="Helical" evidence="1">
    <location>
        <begin position="21"/>
        <end position="41"/>
    </location>
</feature>
<feature type="transmembrane region" description="Helical" evidence="1">
    <location>
        <begin position="49"/>
        <end position="69"/>
    </location>
</feature>
<feature type="transmembrane region" description="Helical" evidence="1">
    <location>
        <begin position="96"/>
        <end position="116"/>
    </location>
</feature>
<feature type="transmembrane region" description="Helical" evidence="1">
    <location>
        <begin position="131"/>
        <end position="151"/>
    </location>
</feature>
<feature type="transmembrane region" description="Helical" evidence="1">
    <location>
        <begin position="167"/>
        <end position="187"/>
    </location>
</feature>
<feature type="transmembrane region" description="Helical" evidence="1">
    <location>
        <begin position="199"/>
        <end position="219"/>
    </location>
</feature>
<feature type="transmembrane region" description="Helical" evidence="1">
    <location>
        <begin position="248"/>
        <end position="270"/>
    </location>
</feature>
<feature type="transmembrane region" description="Helical" evidence="1">
    <location>
        <begin position="283"/>
        <end position="303"/>
    </location>
</feature>
<feature type="transmembrane region" description="Helical" evidence="1">
    <location>
        <begin position="324"/>
        <end position="344"/>
    </location>
</feature>
<feature type="transmembrane region" description="Helical" evidence="1">
    <location>
        <begin position="357"/>
        <end position="377"/>
    </location>
</feature>
<feature type="transmembrane region" description="Helical" evidence="1">
    <location>
        <begin position="392"/>
        <end position="412"/>
    </location>
</feature>
<feature type="transmembrane region" description="Helical" evidence="1">
    <location>
        <begin position="417"/>
        <end position="437"/>
    </location>
</feature>
<keyword id="KW-0997">Cell inner membrane</keyword>
<keyword id="KW-1003">Cell membrane</keyword>
<keyword id="KW-0472">Membrane</keyword>
<keyword id="KW-1185">Reference proteome</keyword>
<keyword id="KW-0812">Transmembrane</keyword>
<keyword id="KW-1133">Transmembrane helix</keyword>
<keyword id="KW-0813">Transport</keyword>
<comment type="function">
    <text evidence="2">Flavin adenine dinucleotide (FAD) transporter that facilitates export of flavin electron shuttles.</text>
</comment>
<comment type="subcellular location">
    <subcellularLocation>
        <location evidence="2">Cell inner membrane</location>
        <topology evidence="1">Multi-pass membrane protein</topology>
    </subcellularLocation>
</comment>
<comment type="disruption phenotype">
    <text evidence="2">Deletion of the gene results in a severe decrease in flavin export. Mutants lacking the gene have no defect in reduction of soluble Fe(III), but they are deficient in the rate of insoluble Fe(III) oxide reduction.</text>
</comment>
<comment type="similarity">
    <text evidence="4">Belongs to the multi antimicrobial extrusion (MATE) (TC 2.A.66.1) family.</text>
</comment>
<organism>
    <name type="scientific">Shewanella oneidensis (strain ATCC 700550 / JCM 31522 / CIP 106686 / LMG 19005 / NCIMB 14063 / MR-1)</name>
    <dbReference type="NCBI Taxonomy" id="211586"/>
    <lineage>
        <taxon>Bacteria</taxon>
        <taxon>Pseudomonadati</taxon>
        <taxon>Pseudomonadota</taxon>
        <taxon>Gammaproteobacteria</taxon>
        <taxon>Alteromonadales</taxon>
        <taxon>Shewanellaceae</taxon>
        <taxon>Shewanella</taxon>
    </lineage>
</organism>
<gene>
    <name evidence="3" type="primary">bfe</name>
    <name evidence="5" type="ordered locus">SO_0702</name>
</gene>
<sequence length="452" mass="48535">MKDRHGLLSAPIGRVLLNMSLPNLIGIMTILGFSLADTFFISQLGTEALAAISFTFPVTLIISSIAIGVGAGVSTNLGRLIGSGNAPQAKVFLHDALLLTFILIASLSALGSIFIEPLFSLLGANETSLPLIHDYMMYWYVGAPLLVLLMVGNQGLRSTGDTRSPAMIMTLAAIINLILDPLLIFGIGPFPRLEIQGAAIATLFSWLVALSLSGYLLIIKHRMLERAAFDIDRMRANWSKLAHIAQPAALMNLINPLANAVIMAMLAHIDHSAVAAFGAGTRLESVLLIVVMALSSSLMPFIAQNLGAGQPQRAKQALLLSLKFILVFQTLLYIPLAFFAQPLASLFSTDPQVLEWLSFYILVLPCAYGPLGIVIIFATALNAYHRPMSSLVINLCRLVLLMLPLAALGSYIDGVKGLLLALPITNLLMGIACYYLAQRICEPVKATTADTL</sequence>
<accession>Q8EIX5</accession>
<name>BFE_SHEON</name>
<protein>
    <recommendedName>
        <fullName evidence="3">FAD transporter</fullName>
    </recommendedName>
    <alternativeName>
        <fullName evidence="3">Bacterial flavin adenine dinucleotide exporter</fullName>
        <shortName evidence="3">Bacterial FAD exporter</shortName>
    </alternativeName>
</protein>
<evidence type="ECO:0000255" key="1"/>
<evidence type="ECO:0000269" key="2">
    <source>
    </source>
</evidence>
<evidence type="ECO:0000303" key="3">
    <source>
    </source>
</evidence>
<evidence type="ECO:0000305" key="4"/>
<evidence type="ECO:0000312" key="5">
    <source>
        <dbReference type="EMBL" id="AAN53780.1"/>
    </source>
</evidence>
<proteinExistence type="inferred from homology"/>
<reference key="1">
    <citation type="journal article" date="2002" name="Nat. Biotechnol.">
        <title>Genome sequence of the dissimilatory metal ion-reducing bacterium Shewanella oneidensis.</title>
        <authorList>
            <person name="Heidelberg J.F."/>
            <person name="Paulsen I.T."/>
            <person name="Nelson K.E."/>
            <person name="Gaidos E.J."/>
            <person name="Nelson W.C."/>
            <person name="Read T.D."/>
            <person name="Eisen J.A."/>
            <person name="Seshadri R."/>
            <person name="Ward N.L."/>
            <person name="Methe B.A."/>
            <person name="Clayton R.A."/>
            <person name="Meyer T."/>
            <person name="Tsapin A."/>
            <person name="Scott J."/>
            <person name="Beanan M.J."/>
            <person name="Brinkac L.M."/>
            <person name="Daugherty S.C."/>
            <person name="DeBoy R.T."/>
            <person name="Dodson R.J."/>
            <person name="Durkin A.S."/>
            <person name="Haft D.H."/>
            <person name="Kolonay J.F."/>
            <person name="Madupu R."/>
            <person name="Peterson J.D."/>
            <person name="Umayam L.A."/>
            <person name="White O."/>
            <person name="Wolf A.M."/>
            <person name="Vamathevan J.J."/>
            <person name="Weidman J.F."/>
            <person name="Impraim M."/>
            <person name="Lee K."/>
            <person name="Berry K.J."/>
            <person name="Lee C."/>
            <person name="Mueller J."/>
            <person name="Khouri H.M."/>
            <person name="Gill J."/>
            <person name="Utterback T.R."/>
            <person name="McDonald L.A."/>
            <person name="Feldblyum T.V."/>
            <person name="Smith H.O."/>
            <person name="Venter J.C."/>
            <person name="Nealson K.H."/>
            <person name="Fraser C.M."/>
        </authorList>
    </citation>
    <scope>NUCLEOTIDE SEQUENCE [LARGE SCALE GENOMIC DNA]</scope>
    <source>
        <strain>ATCC 700550 / JCM 31522 / CIP 106686 / LMG 19005 / NCIMB 14063 / MR-1</strain>
    </source>
</reference>
<reference key="2">
    <citation type="journal article" date="2013" name="MBio">
        <title>Flavin electron shuttles dominate extracellular electron transfer by Shewanella oneidensis.</title>
        <authorList>
            <person name="Kotloski N.J."/>
            <person name="Gralnick J.A."/>
        </authorList>
    </citation>
    <scope>FUNCTION</scope>
    <scope>SUBCELLULAR LOCATION</scope>
    <scope>DISRUPTION PHENOTYPE</scope>
    <source>
        <strain>ATCC 700550 / JCM 31522 / CIP 106686 / LMG 19005 / NCIMB 14063 / MR-1</strain>
    </source>
</reference>